<keyword id="KW-0245">EGF-like domain</keyword>
<keyword id="KW-1185">Reference proteome</keyword>
<accession>Q0D2K5</accession>
<organism>
    <name type="scientific">Homo sapiens</name>
    <name type="common">Human</name>
    <dbReference type="NCBI Taxonomy" id="9606"/>
    <lineage>
        <taxon>Eukaryota</taxon>
        <taxon>Metazoa</taxon>
        <taxon>Chordata</taxon>
        <taxon>Craniata</taxon>
        <taxon>Vertebrata</taxon>
        <taxon>Euteleostomi</taxon>
        <taxon>Mammalia</taxon>
        <taxon>Eutheria</taxon>
        <taxon>Euarchontoglires</taxon>
        <taxon>Primates</taxon>
        <taxon>Haplorrhini</taxon>
        <taxon>Catarrhini</taxon>
        <taxon>Hominidae</taxon>
        <taxon>Homo</taxon>
    </lineage>
</organism>
<feature type="chain" id="PRO_0000340646" description="Putative EGF-like and EMI domain-containing protein 1">
    <location>
        <begin position="1"/>
        <end position="195"/>
    </location>
</feature>
<feature type="domain" description="EGF-like">
    <location>
        <begin position="86"/>
        <end position="97"/>
    </location>
</feature>
<feature type="sequence variant" id="VAR_044016" description="In dbSNP:rs603638.">
    <original>G</original>
    <variation>D</variation>
    <location>
        <position position="59"/>
    </location>
</feature>
<feature type="sequence variant" id="VAR_044017" description="In dbSNP:rs678690.">
    <original>P</original>
    <variation>L</variation>
    <location>
        <position position="157"/>
    </location>
</feature>
<proteinExistence type="uncertain"/>
<reference key="1">
    <citation type="journal article" date="2006" name="Nature">
        <title>The DNA sequence, annotation and analysis of human chromosome 3.</title>
        <authorList>
            <person name="Muzny D.M."/>
            <person name="Scherer S.E."/>
            <person name="Kaul R."/>
            <person name="Wang J."/>
            <person name="Yu J."/>
            <person name="Sudbrak R."/>
            <person name="Buhay C.J."/>
            <person name="Chen R."/>
            <person name="Cree A."/>
            <person name="Ding Y."/>
            <person name="Dugan-Rocha S."/>
            <person name="Gill R."/>
            <person name="Gunaratne P."/>
            <person name="Harris R.A."/>
            <person name="Hawes A.C."/>
            <person name="Hernandez J."/>
            <person name="Hodgson A.V."/>
            <person name="Hume J."/>
            <person name="Jackson A."/>
            <person name="Khan Z.M."/>
            <person name="Kovar-Smith C."/>
            <person name="Lewis L.R."/>
            <person name="Lozado R.J."/>
            <person name="Metzker M.L."/>
            <person name="Milosavljevic A."/>
            <person name="Miner G.R."/>
            <person name="Morgan M.B."/>
            <person name="Nazareth L.V."/>
            <person name="Scott G."/>
            <person name="Sodergren E."/>
            <person name="Song X.-Z."/>
            <person name="Steffen D."/>
            <person name="Wei S."/>
            <person name="Wheeler D.A."/>
            <person name="Wright M.W."/>
            <person name="Worley K.C."/>
            <person name="Yuan Y."/>
            <person name="Zhang Z."/>
            <person name="Adams C.Q."/>
            <person name="Ansari-Lari M.A."/>
            <person name="Ayele M."/>
            <person name="Brown M.J."/>
            <person name="Chen G."/>
            <person name="Chen Z."/>
            <person name="Clendenning J."/>
            <person name="Clerc-Blankenburg K.P."/>
            <person name="Chen R."/>
            <person name="Chen Z."/>
            <person name="Davis C."/>
            <person name="Delgado O."/>
            <person name="Dinh H.H."/>
            <person name="Dong W."/>
            <person name="Draper H."/>
            <person name="Ernst S."/>
            <person name="Fu G."/>
            <person name="Gonzalez-Garay M.L."/>
            <person name="Garcia D.K."/>
            <person name="Gillett W."/>
            <person name="Gu J."/>
            <person name="Hao B."/>
            <person name="Haugen E."/>
            <person name="Havlak P."/>
            <person name="He X."/>
            <person name="Hennig S."/>
            <person name="Hu S."/>
            <person name="Huang W."/>
            <person name="Jackson L.R."/>
            <person name="Jacob L.S."/>
            <person name="Kelly S.H."/>
            <person name="Kube M."/>
            <person name="Levy R."/>
            <person name="Li Z."/>
            <person name="Liu B."/>
            <person name="Liu J."/>
            <person name="Liu W."/>
            <person name="Lu J."/>
            <person name="Maheshwari M."/>
            <person name="Nguyen B.-V."/>
            <person name="Okwuonu G.O."/>
            <person name="Palmeiri A."/>
            <person name="Pasternak S."/>
            <person name="Perez L.M."/>
            <person name="Phelps K.A."/>
            <person name="Plopper F.J."/>
            <person name="Qiang B."/>
            <person name="Raymond C."/>
            <person name="Rodriguez R."/>
            <person name="Saenphimmachak C."/>
            <person name="Santibanez J."/>
            <person name="Shen H."/>
            <person name="Shen Y."/>
            <person name="Subramanian S."/>
            <person name="Tabor P.E."/>
            <person name="Verduzco D."/>
            <person name="Waldron L."/>
            <person name="Wang J."/>
            <person name="Wang J."/>
            <person name="Wang Q."/>
            <person name="Williams G.A."/>
            <person name="Wong G.K.-S."/>
            <person name="Yao Z."/>
            <person name="Zhang J."/>
            <person name="Zhang X."/>
            <person name="Zhao G."/>
            <person name="Zhou J."/>
            <person name="Zhou Y."/>
            <person name="Nelson D."/>
            <person name="Lehrach H."/>
            <person name="Reinhardt R."/>
            <person name="Naylor S.L."/>
            <person name="Yang H."/>
            <person name="Olson M."/>
            <person name="Weinstock G."/>
            <person name="Gibbs R.A."/>
        </authorList>
    </citation>
    <scope>NUCLEOTIDE SEQUENCE [LARGE SCALE GENOMIC DNA]</scope>
</reference>
<reference key="2">
    <citation type="journal article" date="2004" name="Genome Res.">
        <title>The status, quality, and expansion of the NIH full-length cDNA project: the Mammalian Gene Collection (MGC).</title>
        <authorList>
            <consortium name="The MGC Project Team"/>
        </authorList>
    </citation>
    <scope>NUCLEOTIDE SEQUENCE [LARGE SCALE MRNA]</scope>
</reference>
<name>EGFEM_HUMAN</name>
<gene>
    <name type="primary">EGFEM1P</name>
    <name type="synonym">C3orf50</name>
    <name type="synonym">NCRNA00259</name>
</gene>
<comment type="caution">
    <text evidence="1">Could be the product of a pseudogene. The N-terminus is shorter and lacks the signal sequence compared to the mouse sequence, suggesting it may not be functional.</text>
</comment>
<sequence>MDELRWYHITVCLDHIFGHNCSLSCKDCMNGGKCQEGKSECSCPAGCRVILCNENCLEGAYGAGCTSECQCVEENTLECSAKNGSCTCKSGYQGNRCQKDGLWGPEGWFSSAPCENGGQCNKKTGNCDCTPDYTRKSCTILRCISLTNLALSRRSSPMKYQQNVSSHREVRQRQQCSSDRPFKKLLCKFSFKIGM</sequence>
<evidence type="ECO:0000305" key="1"/>
<protein>
    <recommendedName>
        <fullName>Putative EGF-like and EMI domain-containing protein 1</fullName>
    </recommendedName>
</protein>
<dbReference type="EMBL" id="AC058333">
    <property type="status" value="NOT_ANNOTATED_CDS"/>
    <property type="molecule type" value="Genomic_DNA"/>
</dbReference>
<dbReference type="EMBL" id="AC092954">
    <property type="status" value="NOT_ANNOTATED_CDS"/>
    <property type="molecule type" value="Genomic_DNA"/>
</dbReference>
<dbReference type="EMBL" id="BC105690">
    <property type="status" value="NOT_ANNOTATED_CDS"/>
    <property type="molecule type" value="mRNA"/>
</dbReference>
<dbReference type="iPTMnet" id="Q0D2K5"/>
<dbReference type="PhosphoSitePlus" id="Q0D2K5"/>
<dbReference type="BioMuta" id="HGNC:25149"/>
<dbReference type="DMDM" id="121940191"/>
<dbReference type="AGR" id="HGNC:25149"/>
<dbReference type="GeneCards" id="EGFEM1P"/>
<dbReference type="HGNC" id="HGNC:25149">
    <property type="gene designation" value="EGFEM1P"/>
</dbReference>
<dbReference type="neXtProt" id="NX_Q0D2K5"/>
<dbReference type="InParanoid" id="Q0D2K5"/>
<dbReference type="PAN-GO" id="Q0D2K5">
    <property type="GO annotations" value="0 GO annotations based on evolutionary models"/>
</dbReference>
<dbReference type="PhylomeDB" id="Q0D2K5"/>
<dbReference type="ChiTaRS" id="EGFEM1P">
    <property type="organism name" value="human"/>
</dbReference>
<dbReference type="Pharos" id="Q0D2K5">
    <property type="development level" value="Tdark"/>
</dbReference>
<dbReference type="Proteomes" id="UP000005640">
    <property type="component" value="Unplaced"/>
</dbReference>
<dbReference type="RNAct" id="Q0D2K5">
    <property type="molecule type" value="protein"/>
</dbReference>
<dbReference type="GO" id="GO:0005044">
    <property type="term" value="F:scavenger receptor activity"/>
    <property type="evidence" value="ECO:0007669"/>
    <property type="project" value="InterPro"/>
</dbReference>
<dbReference type="Gene3D" id="2.170.300.10">
    <property type="entry name" value="Tie2 ligand-binding domain superfamily"/>
    <property type="match status" value="1"/>
</dbReference>
<dbReference type="InterPro" id="IPR042635">
    <property type="entry name" value="MEGF10/SREC1/2-like"/>
</dbReference>
<dbReference type="PANTHER" id="PTHR24043">
    <property type="entry name" value="SCAVENGER RECEPTOR CLASS F"/>
    <property type="match status" value="1"/>
</dbReference>
<dbReference type="PRINTS" id="PR00011">
    <property type="entry name" value="EGFLAMININ"/>
</dbReference>
<dbReference type="PROSITE" id="PS00022">
    <property type="entry name" value="EGF_1"/>
    <property type="match status" value="1"/>
</dbReference>
<dbReference type="PROSITE" id="PS01186">
    <property type="entry name" value="EGF_2"/>
    <property type="match status" value="1"/>
</dbReference>